<protein>
    <recommendedName>
        <fullName evidence="1">Peptidyl-tRNA hydrolase</fullName>
        <shortName evidence="1">Pth</shortName>
        <ecNumber evidence="1">3.1.1.29</ecNumber>
    </recommendedName>
</protein>
<feature type="chain" id="PRO_0000187750" description="Peptidyl-tRNA hydrolase">
    <location>
        <begin position="1"/>
        <end position="186"/>
    </location>
</feature>
<feature type="active site" description="Proton acceptor" evidence="1">
    <location>
        <position position="19"/>
    </location>
</feature>
<feature type="binding site" evidence="1">
    <location>
        <position position="14"/>
    </location>
    <ligand>
        <name>tRNA</name>
        <dbReference type="ChEBI" id="CHEBI:17843"/>
    </ligand>
</feature>
<feature type="binding site" evidence="1">
    <location>
        <position position="61"/>
    </location>
    <ligand>
        <name>tRNA</name>
        <dbReference type="ChEBI" id="CHEBI:17843"/>
    </ligand>
</feature>
<feature type="binding site" evidence="1">
    <location>
        <position position="63"/>
    </location>
    <ligand>
        <name>tRNA</name>
        <dbReference type="ChEBI" id="CHEBI:17843"/>
    </ligand>
</feature>
<feature type="binding site" evidence="1">
    <location>
        <position position="107"/>
    </location>
    <ligand>
        <name>tRNA</name>
        <dbReference type="ChEBI" id="CHEBI:17843"/>
    </ligand>
</feature>
<feature type="site" description="Discriminates between blocked and unblocked aminoacyl-tRNA" evidence="1">
    <location>
        <position position="9"/>
    </location>
</feature>
<feature type="site" description="Stabilizes the basic form of H active site to accept a proton" evidence="1">
    <location>
        <position position="86"/>
    </location>
</feature>
<keyword id="KW-0963">Cytoplasm</keyword>
<keyword id="KW-0378">Hydrolase</keyword>
<keyword id="KW-0694">RNA-binding</keyword>
<keyword id="KW-0820">tRNA-binding</keyword>
<sequence length="186" mass="20956">MTLLVGLGNPTLRYDHTRHNAGFDILDSLVSELDLSFIFSPKHNAYLCVYKDFILLKPQTYMNLSGESVLSAKNFYKTKELLIVHDDLDLPLGVVKFKKGGGNGGHNGLKSIDALCSNSYYRLRVGISKGINITEHVLSKFHNNEEPLKNAAFEHAKNALKFFIESHDFNATQNRFTLKKPLQIES</sequence>
<proteinExistence type="inferred from homology"/>
<organism>
    <name type="scientific">Helicobacter pylori (strain J99 / ATCC 700824)</name>
    <name type="common">Campylobacter pylori J99</name>
    <dbReference type="NCBI Taxonomy" id="85963"/>
    <lineage>
        <taxon>Bacteria</taxon>
        <taxon>Pseudomonadati</taxon>
        <taxon>Campylobacterota</taxon>
        <taxon>Epsilonproteobacteria</taxon>
        <taxon>Campylobacterales</taxon>
        <taxon>Helicobacteraceae</taxon>
        <taxon>Helicobacter</taxon>
    </lineage>
</organism>
<evidence type="ECO:0000255" key="1">
    <source>
        <dbReference type="HAMAP-Rule" id="MF_00083"/>
    </source>
</evidence>
<accession>Q9ZJC3</accession>
<reference key="1">
    <citation type="journal article" date="1999" name="Nature">
        <title>Genomic sequence comparison of two unrelated isolates of the human gastric pathogen Helicobacter pylori.</title>
        <authorList>
            <person name="Alm R.A."/>
            <person name="Ling L.-S.L."/>
            <person name="Moir D.T."/>
            <person name="King B.L."/>
            <person name="Brown E.D."/>
            <person name="Doig P.C."/>
            <person name="Smith D.R."/>
            <person name="Noonan B."/>
            <person name="Guild B.C."/>
            <person name="deJonge B.L."/>
            <person name="Carmel G."/>
            <person name="Tummino P.J."/>
            <person name="Caruso A."/>
            <person name="Uria-Nickelsen M."/>
            <person name="Mills D.M."/>
            <person name="Ives C."/>
            <person name="Gibson R."/>
            <person name="Merberg D."/>
            <person name="Mills S.D."/>
            <person name="Jiang Q."/>
            <person name="Taylor D.E."/>
            <person name="Vovis G.F."/>
            <person name="Trust T.J."/>
        </authorList>
    </citation>
    <scope>NUCLEOTIDE SEQUENCE [LARGE SCALE GENOMIC DNA]</scope>
    <source>
        <strain>J99 / ATCC 700824</strain>
    </source>
</reference>
<name>PTH_HELPJ</name>
<comment type="function">
    <text evidence="1">Hydrolyzes ribosome-free peptidyl-tRNAs (with 1 or more amino acids incorporated), which drop off the ribosome during protein synthesis, or as a result of ribosome stalling.</text>
</comment>
<comment type="function">
    <text evidence="1">Catalyzes the release of premature peptidyl moieties from peptidyl-tRNA molecules trapped in stalled 50S ribosomal subunits, and thus maintains levels of free tRNAs and 50S ribosomes.</text>
</comment>
<comment type="catalytic activity">
    <reaction evidence="1">
        <text>an N-acyl-L-alpha-aminoacyl-tRNA + H2O = an N-acyl-L-amino acid + a tRNA + H(+)</text>
        <dbReference type="Rhea" id="RHEA:54448"/>
        <dbReference type="Rhea" id="RHEA-COMP:10123"/>
        <dbReference type="Rhea" id="RHEA-COMP:13883"/>
        <dbReference type="ChEBI" id="CHEBI:15377"/>
        <dbReference type="ChEBI" id="CHEBI:15378"/>
        <dbReference type="ChEBI" id="CHEBI:59874"/>
        <dbReference type="ChEBI" id="CHEBI:78442"/>
        <dbReference type="ChEBI" id="CHEBI:138191"/>
        <dbReference type="EC" id="3.1.1.29"/>
    </reaction>
</comment>
<comment type="subunit">
    <text evidence="1">Monomer.</text>
</comment>
<comment type="subcellular location">
    <subcellularLocation>
        <location evidence="1">Cytoplasm</location>
    </subcellularLocation>
</comment>
<comment type="similarity">
    <text evidence="1">Belongs to the PTH family.</text>
</comment>
<gene>
    <name evidence="1" type="primary">pth</name>
    <name type="ordered locus">jhp_1390</name>
</gene>
<dbReference type="EC" id="3.1.1.29" evidence="1"/>
<dbReference type="EMBL" id="AE001439">
    <property type="protein sequence ID" value="AAD06971.1"/>
    <property type="molecule type" value="Genomic_DNA"/>
</dbReference>
<dbReference type="PIR" id="G71812">
    <property type="entry name" value="G71812"/>
</dbReference>
<dbReference type="RefSeq" id="WP_000174020.1">
    <property type="nucleotide sequence ID" value="NC_000921.1"/>
</dbReference>
<dbReference type="SMR" id="Q9ZJC3"/>
<dbReference type="KEGG" id="hpj:jhp_1390"/>
<dbReference type="PATRIC" id="fig|85963.30.peg.1161"/>
<dbReference type="eggNOG" id="COG0193">
    <property type="taxonomic scope" value="Bacteria"/>
</dbReference>
<dbReference type="Proteomes" id="UP000000804">
    <property type="component" value="Chromosome"/>
</dbReference>
<dbReference type="GO" id="GO:0005737">
    <property type="term" value="C:cytoplasm"/>
    <property type="evidence" value="ECO:0007669"/>
    <property type="project" value="UniProtKB-SubCell"/>
</dbReference>
<dbReference type="GO" id="GO:0004045">
    <property type="term" value="F:peptidyl-tRNA hydrolase activity"/>
    <property type="evidence" value="ECO:0007669"/>
    <property type="project" value="UniProtKB-UniRule"/>
</dbReference>
<dbReference type="GO" id="GO:0000049">
    <property type="term" value="F:tRNA binding"/>
    <property type="evidence" value="ECO:0007669"/>
    <property type="project" value="UniProtKB-UniRule"/>
</dbReference>
<dbReference type="GO" id="GO:0006515">
    <property type="term" value="P:protein quality control for misfolded or incompletely synthesized proteins"/>
    <property type="evidence" value="ECO:0007669"/>
    <property type="project" value="UniProtKB-UniRule"/>
</dbReference>
<dbReference type="GO" id="GO:0072344">
    <property type="term" value="P:rescue of stalled ribosome"/>
    <property type="evidence" value="ECO:0007669"/>
    <property type="project" value="UniProtKB-UniRule"/>
</dbReference>
<dbReference type="CDD" id="cd00462">
    <property type="entry name" value="PTH"/>
    <property type="match status" value="1"/>
</dbReference>
<dbReference type="FunFam" id="3.40.50.1470:FF:000001">
    <property type="entry name" value="Peptidyl-tRNA hydrolase"/>
    <property type="match status" value="1"/>
</dbReference>
<dbReference type="Gene3D" id="3.40.50.1470">
    <property type="entry name" value="Peptidyl-tRNA hydrolase"/>
    <property type="match status" value="1"/>
</dbReference>
<dbReference type="HAMAP" id="MF_00083">
    <property type="entry name" value="Pept_tRNA_hydro_bact"/>
    <property type="match status" value="1"/>
</dbReference>
<dbReference type="InterPro" id="IPR001328">
    <property type="entry name" value="Pept_tRNA_hydro"/>
</dbReference>
<dbReference type="InterPro" id="IPR018171">
    <property type="entry name" value="Pept_tRNA_hydro_CS"/>
</dbReference>
<dbReference type="InterPro" id="IPR036416">
    <property type="entry name" value="Pept_tRNA_hydro_sf"/>
</dbReference>
<dbReference type="NCBIfam" id="TIGR00447">
    <property type="entry name" value="pth"/>
    <property type="match status" value="1"/>
</dbReference>
<dbReference type="PANTHER" id="PTHR17224">
    <property type="entry name" value="PEPTIDYL-TRNA HYDROLASE"/>
    <property type="match status" value="1"/>
</dbReference>
<dbReference type="PANTHER" id="PTHR17224:SF1">
    <property type="entry name" value="PEPTIDYL-TRNA HYDROLASE"/>
    <property type="match status" value="1"/>
</dbReference>
<dbReference type="Pfam" id="PF01195">
    <property type="entry name" value="Pept_tRNA_hydro"/>
    <property type="match status" value="1"/>
</dbReference>
<dbReference type="SUPFAM" id="SSF53178">
    <property type="entry name" value="Peptidyl-tRNA hydrolase-like"/>
    <property type="match status" value="1"/>
</dbReference>
<dbReference type="PROSITE" id="PS01195">
    <property type="entry name" value="PEPT_TRNA_HYDROL_1"/>
    <property type="match status" value="1"/>
</dbReference>
<dbReference type="PROSITE" id="PS01196">
    <property type="entry name" value="PEPT_TRNA_HYDROL_2"/>
    <property type="match status" value="1"/>
</dbReference>